<proteinExistence type="evidence at protein level"/>
<name>PVK2_NAMOO</name>
<comment type="function">
    <text evidence="1">Mediates visceral muscle contractile activity (myotropic activity).</text>
</comment>
<comment type="subcellular location">
    <subcellularLocation>
        <location evidence="6">Secreted</location>
    </subcellularLocation>
</comment>
<comment type="similarity">
    <text evidence="2">Belongs to the periviscerokinin family.</text>
</comment>
<evidence type="ECO:0000250" key="1">
    <source>
        <dbReference type="UniProtKB" id="P83923"/>
    </source>
</evidence>
<evidence type="ECO:0000255" key="2"/>
<evidence type="ECO:0000269" key="3">
    <source>
    </source>
</evidence>
<evidence type="ECO:0000303" key="4">
    <source>
    </source>
</evidence>
<evidence type="ECO:0000305" key="5"/>
<evidence type="ECO:0000305" key="6">
    <source>
    </source>
</evidence>
<organism>
    <name type="scientific">Namaquaphasma ookiepense</name>
    <name type="common">Gladiator bug</name>
    <dbReference type="NCBI Taxonomy" id="409167"/>
    <lineage>
        <taxon>Eukaryota</taxon>
        <taxon>Metazoa</taxon>
        <taxon>Ecdysozoa</taxon>
        <taxon>Arthropoda</taxon>
        <taxon>Hexapoda</taxon>
        <taxon>Insecta</taxon>
        <taxon>Pterygota</taxon>
        <taxon>Neoptera</taxon>
        <taxon>Polyneoptera</taxon>
        <taxon>Mantophasmatodea</taxon>
        <taxon>Austrophasmatidae</taxon>
        <taxon>Namaquaphasma</taxon>
    </lineage>
</organism>
<accession>P86997</accession>
<protein>
    <recommendedName>
        <fullName evidence="4">CAPA-Periviscerokinin-2</fullName>
        <shortName evidence="4">CAPA-PVK-2</shortName>
    </recommendedName>
</protein>
<dbReference type="GO" id="GO:0005576">
    <property type="term" value="C:extracellular region"/>
    <property type="evidence" value="ECO:0007669"/>
    <property type="project" value="UniProtKB-SubCell"/>
</dbReference>
<dbReference type="GO" id="GO:0007218">
    <property type="term" value="P:neuropeptide signaling pathway"/>
    <property type="evidence" value="ECO:0007669"/>
    <property type="project" value="UniProtKB-KW"/>
</dbReference>
<reference evidence="5" key="1">
    <citation type="journal article" date="2012" name="Syst. Biol.">
        <title>Peptidomics-based phylogeny and biogeography of Mantophasmatodea (Hexapoda).</title>
        <authorList>
            <person name="Predel R."/>
            <person name="Neupert S."/>
            <person name="Huetteroth W."/>
            <person name="Kahnt J."/>
            <person name="Waidelich D."/>
            <person name="Roth S."/>
        </authorList>
    </citation>
    <scope>PROTEIN SEQUENCE</scope>
    <scope>AMIDATION AT VAL-19</scope>
    <source>
        <tissue evidence="3">Abdominal perisympathetic organs</tissue>
    </source>
</reference>
<sequence>SGLQFAVLDGQGFIPFPRV</sequence>
<keyword id="KW-0027">Amidation</keyword>
<keyword id="KW-0903">Direct protein sequencing</keyword>
<keyword id="KW-0527">Neuropeptide</keyword>
<keyword id="KW-0964">Secreted</keyword>
<feature type="peptide" id="PRO_0000420512" description="CAPA-Periviscerokinin-2" evidence="3">
    <location>
        <begin position="1"/>
        <end position="19"/>
    </location>
</feature>
<feature type="modified residue" description="Valine amide" evidence="3">
    <location>
        <position position="19"/>
    </location>
</feature>